<reference key="1">
    <citation type="journal article" date="2003" name="Proc. Natl. Acad. Sci. U.S.A.">
        <title>The complete genome sequence of Mycobacterium bovis.</title>
        <authorList>
            <person name="Garnier T."/>
            <person name="Eiglmeier K."/>
            <person name="Camus J.-C."/>
            <person name="Medina N."/>
            <person name="Mansoor H."/>
            <person name="Pryor M."/>
            <person name="Duthoy S."/>
            <person name="Grondin S."/>
            <person name="Lacroix C."/>
            <person name="Monsempe C."/>
            <person name="Simon S."/>
            <person name="Harris B."/>
            <person name="Atkin R."/>
            <person name="Doggett J."/>
            <person name="Mayes R."/>
            <person name="Keating L."/>
            <person name="Wheeler P.R."/>
            <person name="Parkhill J."/>
            <person name="Barrell B.G."/>
            <person name="Cole S.T."/>
            <person name="Gordon S.V."/>
            <person name="Hewinson R.G."/>
        </authorList>
    </citation>
    <scope>NUCLEOTIDE SEQUENCE [LARGE SCALE GENOMIC DNA]</scope>
    <source>
        <strain>ATCC BAA-935 / AF2122/97</strain>
    </source>
</reference>
<reference key="2">
    <citation type="journal article" date="2017" name="Genome Announc.">
        <title>Updated reference genome sequence and annotation of Mycobacterium bovis AF2122/97.</title>
        <authorList>
            <person name="Malone K.M."/>
            <person name="Farrell D."/>
            <person name="Stuber T.P."/>
            <person name="Schubert O.T."/>
            <person name="Aebersold R."/>
            <person name="Robbe-Austerman S."/>
            <person name="Gordon S.V."/>
        </authorList>
    </citation>
    <scope>NUCLEOTIDE SEQUENCE [LARGE SCALE GENOMIC DNA]</scope>
    <scope>GENOME REANNOTATION</scope>
    <source>
        <strain>ATCC BAA-935 / AF2122/97</strain>
    </source>
</reference>
<protein>
    <recommendedName>
        <fullName evidence="1">Ribosomal RNA small subunit methyltransferase I</fullName>
        <ecNumber evidence="1">2.1.1.198</ecNumber>
    </recommendedName>
    <alternativeName>
        <fullName evidence="1">16S rRNA 2'-O-ribose C1402 methyltransferase</fullName>
    </alternativeName>
    <alternativeName>
        <fullName evidence="1">rRNA (cytidine-2'-O-)-methyltransferase RsmI</fullName>
    </alternativeName>
</protein>
<accession>P0A641</accession>
<accession>A0A1R3XX30</accession>
<accession>O05588</accession>
<accession>X2BGS7</accession>
<comment type="function">
    <text evidence="1">Catalyzes the 2'-O-methylation of the ribose of cytidine 1402 (C1402) in 16S rRNA.</text>
</comment>
<comment type="catalytic activity">
    <reaction evidence="1">
        <text>cytidine(1402) in 16S rRNA + S-adenosyl-L-methionine = 2'-O-methylcytidine(1402) in 16S rRNA + S-adenosyl-L-homocysteine + H(+)</text>
        <dbReference type="Rhea" id="RHEA:42924"/>
        <dbReference type="Rhea" id="RHEA-COMP:10285"/>
        <dbReference type="Rhea" id="RHEA-COMP:10286"/>
        <dbReference type="ChEBI" id="CHEBI:15378"/>
        <dbReference type="ChEBI" id="CHEBI:57856"/>
        <dbReference type="ChEBI" id="CHEBI:59789"/>
        <dbReference type="ChEBI" id="CHEBI:74495"/>
        <dbReference type="ChEBI" id="CHEBI:82748"/>
        <dbReference type="EC" id="2.1.1.198"/>
    </reaction>
</comment>
<comment type="subcellular location">
    <subcellularLocation>
        <location evidence="1">Cytoplasm</location>
    </subcellularLocation>
</comment>
<comment type="similarity">
    <text evidence="1">Belongs to the methyltransferase superfamily. RsmI family.</text>
</comment>
<keyword id="KW-0963">Cytoplasm</keyword>
<keyword id="KW-0489">Methyltransferase</keyword>
<keyword id="KW-1185">Reference proteome</keyword>
<keyword id="KW-0698">rRNA processing</keyword>
<keyword id="KW-0949">S-adenosyl-L-methionine</keyword>
<keyword id="KW-0808">Transferase</keyword>
<organism>
    <name type="scientific">Mycobacterium bovis (strain ATCC BAA-935 / AF2122/97)</name>
    <dbReference type="NCBI Taxonomy" id="233413"/>
    <lineage>
        <taxon>Bacteria</taxon>
        <taxon>Bacillati</taxon>
        <taxon>Actinomycetota</taxon>
        <taxon>Actinomycetes</taxon>
        <taxon>Mycobacteriales</taxon>
        <taxon>Mycobacteriaceae</taxon>
        <taxon>Mycobacterium</taxon>
        <taxon>Mycobacterium tuberculosis complex</taxon>
    </lineage>
</organism>
<dbReference type="EC" id="2.1.1.198" evidence="1"/>
<dbReference type="EMBL" id="LT708304">
    <property type="protein sequence ID" value="SIT99630.1"/>
    <property type="molecule type" value="Genomic_DNA"/>
</dbReference>
<dbReference type="RefSeq" id="NP_854687.1">
    <property type="nucleotide sequence ID" value="NC_002945.3"/>
</dbReference>
<dbReference type="RefSeq" id="WP_003405173.1">
    <property type="nucleotide sequence ID" value="NC_002945.4"/>
</dbReference>
<dbReference type="SMR" id="P0A641"/>
<dbReference type="GeneID" id="45424975"/>
<dbReference type="KEGG" id="mbo:BQ2027_MB1030"/>
<dbReference type="PATRIC" id="fig|233413.5.peg.1122"/>
<dbReference type="Proteomes" id="UP000001419">
    <property type="component" value="Chromosome"/>
</dbReference>
<dbReference type="GO" id="GO:0005737">
    <property type="term" value="C:cytoplasm"/>
    <property type="evidence" value="ECO:0007669"/>
    <property type="project" value="UniProtKB-SubCell"/>
</dbReference>
<dbReference type="GO" id="GO:0070677">
    <property type="term" value="F:rRNA (cytosine-2'-O-)-methyltransferase activity"/>
    <property type="evidence" value="ECO:0007669"/>
    <property type="project" value="UniProtKB-UniRule"/>
</dbReference>
<dbReference type="CDD" id="cd11648">
    <property type="entry name" value="RsmI"/>
    <property type="match status" value="1"/>
</dbReference>
<dbReference type="FunFam" id="3.30.950.10:FF:000002">
    <property type="entry name" value="Ribosomal RNA small subunit methyltransferase I"/>
    <property type="match status" value="1"/>
</dbReference>
<dbReference type="FunFam" id="3.40.1010.10:FF:000007">
    <property type="entry name" value="Ribosomal RNA small subunit methyltransferase I"/>
    <property type="match status" value="1"/>
</dbReference>
<dbReference type="Gene3D" id="3.40.1010.10">
    <property type="entry name" value="Cobalt-precorrin-4 Transmethylase, Domain 1"/>
    <property type="match status" value="1"/>
</dbReference>
<dbReference type="Gene3D" id="3.30.950.10">
    <property type="entry name" value="Methyltransferase, Cobalt-precorrin-4 Transmethylase, Domain 2"/>
    <property type="match status" value="1"/>
</dbReference>
<dbReference type="HAMAP" id="MF_01877">
    <property type="entry name" value="16SrRNA_methyltr_I"/>
    <property type="match status" value="1"/>
</dbReference>
<dbReference type="InterPro" id="IPR000878">
    <property type="entry name" value="4pyrrol_Mease"/>
</dbReference>
<dbReference type="InterPro" id="IPR035996">
    <property type="entry name" value="4pyrrol_Methylase_sf"/>
</dbReference>
<dbReference type="InterPro" id="IPR014777">
    <property type="entry name" value="4pyrrole_Mease_sub1"/>
</dbReference>
<dbReference type="InterPro" id="IPR014776">
    <property type="entry name" value="4pyrrole_Mease_sub2"/>
</dbReference>
<dbReference type="InterPro" id="IPR008189">
    <property type="entry name" value="rRNA_ssu_MeTfrase_I"/>
</dbReference>
<dbReference type="InterPro" id="IPR018063">
    <property type="entry name" value="SAM_MeTrfase_RsmI_CS"/>
</dbReference>
<dbReference type="NCBIfam" id="TIGR00096">
    <property type="entry name" value="16S rRNA (cytidine(1402)-2'-O)-methyltransferase"/>
    <property type="match status" value="1"/>
</dbReference>
<dbReference type="PANTHER" id="PTHR46111">
    <property type="entry name" value="RIBOSOMAL RNA SMALL SUBUNIT METHYLTRANSFERASE I"/>
    <property type="match status" value="1"/>
</dbReference>
<dbReference type="PANTHER" id="PTHR46111:SF1">
    <property type="entry name" value="RIBOSOMAL RNA SMALL SUBUNIT METHYLTRANSFERASE I"/>
    <property type="match status" value="1"/>
</dbReference>
<dbReference type="Pfam" id="PF00590">
    <property type="entry name" value="TP_methylase"/>
    <property type="match status" value="1"/>
</dbReference>
<dbReference type="PIRSF" id="PIRSF005917">
    <property type="entry name" value="MTase_YraL"/>
    <property type="match status" value="1"/>
</dbReference>
<dbReference type="SUPFAM" id="SSF53790">
    <property type="entry name" value="Tetrapyrrole methylase"/>
    <property type="match status" value="1"/>
</dbReference>
<dbReference type="PROSITE" id="PS01296">
    <property type="entry name" value="RSMI"/>
    <property type="match status" value="1"/>
</dbReference>
<feature type="chain" id="PRO_0000211947" description="Ribosomal RNA small subunit methyltransferase I">
    <location>
        <begin position="1"/>
        <end position="285"/>
    </location>
</feature>
<sequence>MSSGRLLLGATPLGQPSDASPRLAAALATADVVAAEDTRRVRKLAKALDIRIGGRVVSLFDRVEALRVTALLDAINNGATVLVVSDAGTPVISDPGYRLVAACIDAGVSVTCLPGPSAVTTALVMSGLPAEKFCFEGFAPRKGAARRAWLAELAEERRTCVFFESPRRLAACLNDAVEQLGGARPAAICRELTKVHEEVVRGSLDELAIWAAGGVLGEITVVVAGAAPHAELSSLIAQVEEFVAAGIRVKDACSEVAAAHPGVRTRQLYDAVLQSRRETGGPAQP</sequence>
<evidence type="ECO:0000255" key="1">
    <source>
        <dbReference type="HAMAP-Rule" id="MF_01877"/>
    </source>
</evidence>
<gene>
    <name evidence="1" type="primary">rsmI</name>
    <name type="ordered locus">BQ2027_MB1030</name>
</gene>
<proteinExistence type="inferred from homology"/>
<name>RSMI_MYCBO</name>